<accession>B2KI88</accession>
<reference key="1">
    <citation type="submission" date="2008-04" db="EMBL/GenBank/DDBJ databases">
        <title>NISC comparative sequencing initiative.</title>
        <authorList>
            <person name="Antonellis A."/>
            <person name="Ayele K."/>
            <person name="Benjamin B."/>
            <person name="Blakesley R.W."/>
            <person name="Boakye A."/>
            <person name="Bouffard G.G."/>
            <person name="Brinkley C."/>
            <person name="Brooks S."/>
            <person name="Chu G."/>
            <person name="Coleman H."/>
            <person name="Engle J."/>
            <person name="Gestole M."/>
            <person name="Greene A."/>
            <person name="Guan X."/>
            <person name="Gupta J."/>
            <person name="Haghighi P."/>
            <person name="Han J."/>
            <person name="Hansen N."/>
            <person name="Ho S.-L."/>
            <person name="Hu P."/>
            <person name="Hunter G."/>
            <person name="Hurle B."/>
            <person name="Idol J.R."/>
            <person name="Kwong P."/>
            <person name="Laric P."/>
            <person name="Larson S."/>
            <person name="Lee-Lin S.-Q."/>
            <person name="Legaspi R."/>
            <person name="Madden M."/>
            <person name="Maduro Q.L."/>
            <person name="Maduro V.B."/>
            <person name="Margulies E.H."/>
            <person name="Masiello C."/>
            <person name="Maskeri B."/>
            <person name="McDowell J."/>
            <person name="Mojidi H.A."/>
            <person name="Mullikin J.C."/>
            <person name="Oestreicher J.S."/>
            <person name="Park M."/>
            <person name="Portnoy M.E."/>
            <person name="Prasad A."/>
            <person name="Puri O."/>
            <person name="Reddix-Dugue N."/>
            <person name="Schandler K."/>
            <person name="Schueler M.G."/>
            <person name="Sison C."/>
            <person name="Stantripop S."/>
            <person name="Stephen E."/>
            <person name="Taye A."/>
            <person name="Thomas J.W."/>
            <person name="Thomas P.J."/>
            <person name="Tsipouri V."/>
            <person name="Ung L."/>
            <person name="Vogt J.L."/>
            <person name="Wetherby K.D."/>
            <person name="Young A."/>
            <person name="Green E.D."/>
        </authorList>
    </citation>
    <scope>NUCLEOTIDE SEQUENCE [LARGE SCALE GENOMIC DNA]</scope>
</reference>
<proteinExistence type="inferred from homology"/>
<name>SETD3_RHIFE</name>
<dbReference type="EC" id="2.1.1.85" evidence="1"/>
<dbReference type="EMBL" id="DP000715">
    <property type="protein sequence ID" value="ACC64548.1"/>
    <property type="molecule type" value="Genomic_DNA"/>
</dbReference>
<dbReference type="SMR" id="B2KI88"/>
<dbReference type="FunCoup" id="B2KI88">
    <property type="interactions" value="1828"/>
</dbReference>
<dbReference type="InParanoid" id="B2KI88"/>
<dbReference type="Proteomes" id="UP000472240">
    <property type="component" value="Unplaced"/>
</dbReference>
<dbReference type="GO" id="GO:0005737">
    <property type="term" value="C:cytoplasm"/>
    <property type="evidence" value="ECO:0000250"/>
    <property type="project" value="UniProtKB"/>
</dbReference>
<dbReference type="GO" id="GO:0005634">
    <property type="term" value="C:nucleus"/>
    <property type="evidence" value="ECO:0007669"/>
    <property type="project" value="UniProtKB-SubCell"/>
</dbReference>
<dbReference type="GO" id="GO:0003779">
    <property type="term" value="F:actin binding"/>
    <property type="evidence" value="ECO:0007669"/>
    <property type="project" value="UniProtKB-KW"/>
</dbReference>
<dbReference type="GO" id="GO:0046975">
    <property type="term" value="F:histone H3K36 methyltransferase activity"/>
    <property type="evidence" value="ECO:0000250"/>
    <property type="project" value="UniProtKB"/>
</dbReference>
<dbReference type="GO" id="GO:0018064">
    <property type="term" value="F:protein-L-histidine N-tele-methyltransferase activity"/>
    <property type="evidence" value="ECO:0000250"/>
    <property type="project" value="UniProtKB"/>
</dbReference>
<dbReference type="GO" id="GO:0003713">
    <property type="term" value="F:transcription coactivator activity"/>
    <property type="evidence" value="ECO:0000250"/>
    <property type="project" value="UniProtKB"/>
</dbReference>
<dbReference type="GO" id="GO:0030047">
    <property type="term" value="P:actin modification"/>
    <property type="evidence" value="ECO:0000250"/>
    <property type="project" value="UniProtKB"/>
</dbReference>
<dbReference type="GO" id="GO:0018021">
    <property type="term" value="P:peptidyl-histidine methylation"/>
    <property type="evidence" value="ECO:0000250"/>
    <property type="project" value="UniProtKB"/>
</dbReference>
<dbReference type="GO" id="GO:0045893">
    <property type="term" value="P:positive regulation of DNA-templated transcription"/>
    <property type="evidence" value="ECO:0000250"/>
    <property type="project" value="UniProtKB"/>
</dbReference>
<dbReference type="GO" id="GO:0070472">
    <property type="term" value="P:regulation of uterine smooth muscle contraction"/>
    <property type="evidence" value="ECO:0000250"/>
    <property type="project" value="UniProtKB"/>
</dbReference>
<dbReference type="CDD" id="cd19176">
    <property type="entry name" value="SET_SETD3"/>
    <property type="match status" value="1"/>
</dbReference>
<dbReference type="FunFam" id="3.90.1410.10:FF:000001">
    <property type="entry name" value="histone-lysine N-methyltransferase setd3 isoform X1"/>
    <property type="match status" value="1"/>
</dbReference>
<dbReference type="FunFam" id="3.90.1420.10:FF:000001">
    <property type="entry name" value="histone-lysine N-methyltransferase setd3 isoform X1"/>
    <property type="match status" value="1"/>
</dbReference>
<dbReference type="Gene3D" id="3.90.1420.10">
    <property type="entry name" value="Rubisco LSMT, substrate-binding domain"/>
    <property type="match status" value="1"/>
</dbReference>
<dbReference type="Gene3D" id="3.90.1410.10">
    <property type="entry name" value="set domain protein methyltransferase, domain 1"/>
    <property type="match status" value="1"/>
</dbReference>
<dbReference type="InterPro" id="IPR015353">
    <property type="entry name" value="Rubisco_LSMT_subst-bd"/>
</dbReference>
<dbReference type="InterPro" id="IPR036464">
    <property type="entry name" value="Rubisco_LSMT_subst-bd_sf"/>
</dbReference>
<dbReference type="InterPro" id="IPR001214">
    <property type="entry name" value="SET_dom"/>
</dbReference>
<dbReference type="InterPro" id="IPR046341">
    <property type="entry name" value="SET_dom_sf"/>
</dbReference>
<dbReference type="InterPro" id="IPR025785">
    <property type="entry name" value="SETD3"/>
</dbReference>
<dbReference type="InterPro" id="IPR044428">
    <property type="entry name" value="SETD3_SET"/>
</dbReference>
<dbReference type="InterPro" id="IPR050600">
    <property type="entry name" value="SETD3_SETD6_MTase"/>
</dbReference>
<dbReference type="PANTHER" id="PTHR13271:SF47">
    <property type="entry name" value="ACTIN-HISTIDINE N-METHYLTRANSFERASE"/>
    <property type="match status" value="1"/>
</dbReference>
<dbReference type="PANTHER" id="PTHR13271">
    <property type="entry name" value="UNCHARACTERIZED PUTATIVE METHYLTRANSFERASE"/>
    <property type="match status" value="1"/>
</dbReference>
<dbReference type="Pfam" id="PF09273">
    <property type="entry name" value="Rubis-subs-bind"/>
    <property type="match status" value="1"/>
</dbReference>
<dbReference type="Pfam" id="PF00856">
    <property type="entry name" value="SET"/>
    <property type="match status" value="1"/>
</dbReference>
<dbReference type="SUPFAM" id="SSF81822">
    <property type="entry name" value="RuBisCo LSMT C-terminal, substrate-binding domain"/>
    <property type="match status" value="1"/>
</dbReference>
<dbReference type="SUPFAM" id="SSF82199">
    <property type="entry name" value="SET domain"/>
    <property type="match status" value="1"/>
</dbReference>
<dbReference type="PROSITE" id="PS51565">
    <property type="entry name" value="SAM_MT85_SETD3"/>
    <property type="match status" value="1"/>
</dbReference>
<dbReference type="PROSITE" id="PS50280">
    <property type="entry name" value="SET"/>
    <property type="match status" value="1"/>
</dbReference>
<organism>
    <name type="scientific">Rhinolophus ferrumequinum</name>
    <name type="common">Greater horseshoe bat</name>
    <dbReference type="NCBI Taxonomy" id="59479"/>
    <lineage>
        <taxon>Eukaryota</taxon>
        <taxon>Metazoa</taxon>
        <taxon>Chordata</taxon>
        <taxon>Craniata</taxon>
        <taxon>Vertebrata</taxon>
        <taxon>Euteleostomi</taxon>
        <taxon>Mammalia</taxon>
        <taxon>Eutheria</taxon>
        <taxon>Laurasiatheria</taxon>
        <taxon>Chiroptera</taxon>
        <taxon>Yinpterochiroptera</taxon>
        <taxon>Rhinolophoidea</taxon>
        <taxon>Rhinolophidae</taxon>
        <taxon>Rhinolophinae</taxon>
        <taxon>Rhinolophus</taxon>
    </lineage>
</organism>
<feature type="chain" id="PRO_0000408342" description="Actin-histidine N-methyltransferase">
    <location>
        <begin position="1"/>
        <end position="594"/>
    </location>
</feature>
<feature type="domain" description="SET" evidence="3">
    <location>
        <begin position="94"/>
        <end position="314"/>
    </location>
</feature>
<feature type="region of interest" description="Disordered" evidence="5">
    <location>
        <begin position="1"/>
        <end position="23"/>
    </location>
</feature>
<feature type="region of interest" description="Disordered" evidence="5">
    <location>
        <begin position="553"/>
        <end position="594"/>
    </location>
</feature>
<feature type="compositionally biased region" description="Polar residues" evidence="5">
    <location>
        <begin position="10"/>
        <end position="23"/>
    </location>
</feature>
<feature type="compositionally biased region" description="Basic and acidic residues" evidence="5">
    <location>
        <begin position="564"/>
        <end position="594"/>
    </location>
</feature>
<feature type="binding site" evidence="1">
    <location>
        <position position="75"/>
    </location>
    <ligand>
        <name>S-adenosyl-L-methionine</name>
        <dbReference type="ChEBI" id="CHEBI:59789"/>
    </ligand>
</feature>
<feature type="binding site" evidence="1">
    <location>
        <begin position="104"/>
        <end position="106"/>
    </location>
    <ligand>
        <name>S-adenosyl-L-methionine</name>
        <dbReference type="ChEBI" id="CHEBI:59789"/>
    </ligand>
</feature>
<feature type="binding site" evidence="1">
    <location>
        <position position="254"/>
    </location>
    <ligand>
        <name>S-adenosyl-L-methionine</name>
        <dbReference type="ChEBI" id="CHEBI:59789"/>
    </ligand>
</feature>
<feature type="binding site" evidence="1">
    <location>
        <begin position="275"/>
        <end position="279"/>
    </location>
    <ligand>
        <name>S-adenosyl-L-methionine</name>
        <dbReference type="ChEBI" id="CHEBI:59789"/>
    </ligand>
</feature>
<feature type="binding site" evidence="1">
    <location>
        <begin position="325"/>
        <end position="327"/>
    </location>
    <ligand>
        <name>S-adenosyl-L-methionine</name>
        <dbReference type="ChEBI" id="CHEBI:59789"/>
    </ligand>
</feature>
<protein>
    <recommendedName>
        <fullName evidence="1">Actin-histidine N-methyltransferase</fullName>
        <ecNumber evidence="1">2.1.1.85</ecNumber>
    </recommendedName>
    <alternativeName>
        <fullName evidence="6">Protein-L-histidine N-tele-methyltransferase</fullName>
    </alternativeName>
    <alternativeName>
        <fullName evidence="6">SET domain-containing protein 3</fullName>
    </alternativeName>
</protein>
<comment type="function">
    <text evidence="1">Protein-histidine N-methyltransferase that specifically mediates 3-methylhistidine (tele-methylhistidine) methylation of actin at 'His-73'. Histidine methylation of actin is required for smooth muscle contraction of the laboring uterus during delivery. Does not have protein-lysine N-methyltransferase activity and probably only catalyzes histidine methylation of actin.</text>
</comment>
<comment type="catalytic activity">
    <reaction evidence="1">
        <text>L-histidyl-[protein] + S-adenosyl-L-methionine = N(tele)-methyl-L-histidyl-[protein] + S-adenosyl-L-homocysteine + H(+)</text>
        <dbReference type="Rhea" id="RHEA:19369"/>
        <dbReference type="Rhea" id="RHEA-COMP:9745"/>
        <dbReference type="Rhea" id="RHEA-COMP:11600"/>
        <dbReference type="ChEBI" id="CHEBI:15378"/>
        <dbReference type="ChEBI" id="CHEBI:16367"/>
        <dbReference type="ChEBI" id="CHEBI:29979"/>
        <dbReference type="ChEBI" id="CHEBI:57856"/>
        <dbReference type="ChEBI" id="CHEBI:59789"/>
        <dbReference type="EC" id="2.1.1.85"/>
    </reaction>
</comment>
<comment type="subunit">
    <text evidence="2">Interacts with MYOD1.</text>
</comment>
<comment type="subcellular location">
    <subcellularLocation>
        <location evidence="1">Cytoplasm</location>
    </subcellularLocation>
    <subcellularLocation>
        <location evidence="1">Nucleus</location>
    </subcellularLocation>
    <text evidence="1">Localizes mainly in the cytoplasm.</text>
</comment>
<comment type="domain">
    <text evidence="1">The SET domain specifically recognizes and binds actin, suggesting that it does not accommodate substrates diverging from actin.</text>
</comment>
<comment type="PTM">
    <text evidence="1">Phosphorylated by GSK3B, which is required for recognition by the SCF(FBXW7) complex and subsequent degradation.</text>
</comment>
<comment type="PTM">
    <text evidence="1">Ubiquitinated by the SCF(FBXW7) complex following phosphorylation by GSK3B, leading to its degradation by the proteasome.</text>
</comment>
<comment type="similarity">
    <text evidence="4">Belongs to the class V-like SAM-binding methyltransferase superfamily. SETD3 actin-histidine methyltransferase family.</text>
</comment>
<sequence>MGKKSRVKTQKSGTGATASVSPKETLNLASELLQKCSSPAPGPGKEWEEYVQIRSLVEKIRKKQKGLSVTFDGKREDYFPDLMKWASENGASVEGFEMVSFKEEGFGLRATRDIKAEELFLWVPRKLLMTVESAKNSVLGPLYSQDRILQAMGNITLAFHLLCERADPNSFWQPYIQTLPSEYDTPLYFGEDEVRYLQSTQAIHDVFSQYKNTARQYAYFYKVIQTHPHANKLPLKDSFTYEDYRWAVSSVMTRQNQIPTEDGSRVTLALIPLWDMCNHTNGLITTGYNLEDDRCECVALQDFQAGEQIYIFYGTRSNAEFVIHSGFFFDNNSHDRVKIKLGVSKSDRLYAMKAEVLARAGIPTSSVFALHFTEPPISAQLLAFLRVFCMTEEELKEHLLGDNAIDRIFTLGNSEYPVSWDNEVKLWTFLEDRASLLLKTYKTNIEEDKSFLKNHDLSVRATMAIKLRLGEKEILEKAVKSAAANREYYRKQMEEGAPLPKYEESNPGLLEGGVVDSRLPLVLRNLEEEAGVQEALTLVEAVSRAKAVENGLINGENSIPNGTRLEKEDLNQEQSKRVTEDAKEPSDSTEEVKE</sequence>
<keyword id="KW-0009">Actin-binding</keyword>
<keyword id="KW-0963">Cytoplasm</keyword>
<keyword id="KW-0489">Methyltransferase</keyword>
<keyword id="KW-0539">Nucleus</keyword>
<keyword id="KW-0597">Phosphoprotein</keyword>
<keyword id="KW-1185">Reference proteome</keyword>
<keyword id="KW-0949">S-adenosyl-L-methionine</keyword>
<keyword id="KW-0808">Transferase</keyword>
<keyword id="KW-0832">Ubl conjugation</keyword>
<gene>
    <name evidence="1" type="primary">SETD3</name>
</gene>
<evidence type="ECO:0000250" key="1">
    <source>
        <dbReference type="UniProtKB" id="Q86TU7"/>
    </source>
</evidence>
<evidence type="ECO:0000250" key="2">
    <source>
        <dbReference type="UniProtKB" id="Q91WC0"/>
    </source>
</evidence>
<evidence type="ECO:0000255" key="3">
    <source>
        <dbReference type="PROSITE-ProRule" id="PRU00190"/>
    </source>
</evidence>
<evidence type="ECO:0000255" key="4">
    <source>
        <dbReference type="PROSITE-ProRule" id="PRU00898"/>
    </source>
</evidence>
<evidence type="ECO:0000256" key="5">
    <source>
        <dbReference type="SAM" id="MobiDB-lite"/>
    </source>
</evidence>
<evidence type="ECO:0000305" key="6"/>